<organism>
    <name type="scientific">Listeria monocytogenes serotype 4b (strain CLIP80459)</name>
    <dbReference type="NCBI Taxonomy" id="568819"/>
    <lineage>
        <taxon>Bacteria</taxon>
        <taxon>Bacillati</taxon>
        <taxon>Bacillota</taxon>
        <taxon>Bacilli</taxon>
        <taxon>Bacillales</taxon>
        <taxon>Listeriaceae</taxon>
        <taxon>Listeria</taxon>
    </lineage>
</organism>
<feature type="chain" id="PRO_1000206186" description="Aspartate 1-decarboxylase beta chain" evidence="1">
    <location>
        <begin position="1"/>
        <end position="24"/>
    </location>
</feature>
<feature type="chain" id="PRO_1000206187" description="Aspartate 1-decarboxylase alpha chain" evidence="1">
    <location>
        <begin position="25"/>
        <end position="127"/>
    </location>
</feature>
<feature type="active site" description="Schiff-base intermediate with substrate; via pyruvic acid" evidence="1">
    <location>
        <position position="25"/>
    </location>
</feature>
<feature type="active site" description="Proton donor" evidence="1">
    <location>
        <position position="58"/>
    </location>
</feature>
<feature type="binding site" evidence="1">
    <location>
        <position position="57"/>
    </location>
    <ligand>
        <name>substrate</name>
    </ligand>
</feature>
<feature type="binding site" evidence="1">
    <location>
        <begin position="73"/>
        <end position="75"/>
    </location>
    <ligand>
        <name>substrate</name>
    </ligand>
</feature>
<feature type="modified residue" description="Pyruvic acid (Ser)" evidence="1">
    <location>
        <position position="25"/>
    </location>
</feature>
<comment type="function">
    <text evidence="1">Catalyzes the pyruvoyl-dependent decarboxylation of aspartate to produce beta-alanine.</text>
</comment>
<comment type="catalytic activity">
    <reaction evidence="1">
        <text>L-aspartate + H(+) = beta-alanine + CO2</text>
        <dbReference type="Rhea" id="RHEA:19497"/>
        <dbReference type="ChEBI" id="CHEBI:15378"/>
        <dbReference type="ChEBI" id="CHEBI:16526"/>
        <dbReference type="ChEBI" id="CHEBI:29991"/>
        <dbReference type="ChEBI" id="CHEBI:57966"/>
        <dbReference type="EC" id="4.1.1.11"/>
    </reaction>
</comment>
<comment type="cofactor">
    <cofactor evidence="1">
        <name>pyruvate</name>
        <dbReference type="ChEBI" id="CHEBI:15361"/>
    </cofactor>
    <text evidence="1">Binds 1 pyruvoyl group covalently per subunit.</text>
</comment>
<comment type="pathway">
    <text evidence="1">Cofactor biosynthesis; (R)-pantothenate biosynthesis; beta-alanine from L-aspartate: step 1/1.</text>
</comment>
<comment type="subunit">
    <text evidence="1">Heterooctamer of four alpha and four beta subunits.</text>
</comment>
<comment type="subcellular location">
    <subcellularLocation>
        <location evidence="1">Cytoplasm</location>
    </subcellularLocation>
</comment>
<comment type="PTM">
    <text evidence="1">Is synthesized initially as an inactive proenzyme, which is activated by self-cleavage at a specific serine bond to produce a beta-subunit with a hydroxyl group at its C-terminus and an alpha-subunit with a pyruvoyl group at its N-terminus.</text>
</comment>
<comment type="similarity">
    <text evidence="1">Belongs to the PanD family.</text>
</comment>
<dbReference type="EC" id="4.1.1.11" evidence="1"/>
<dbReference type="EMBL" id="FM242711">
    <property type="protein sequence ID" value="CAS05675.1"/>
    <property type="molecule type" value="Genomic_DNA"/>
</dbReference>
<dbReference type="RefSeq" id="WP_003726616.1">
    <property type="nucleotide sequence ID" value="NC_012488.1"/>
</dbReference>
<dbReference type="SMR" id="C1KWK0"/>
<dbReference type="KEGG" id="lmc:Lm4b_01917"/>
<dbReference type="HOGENOM" id="CLU_115305_2_0_9"/>
<dbReference type="UniPathway" id="UPA00028">
    <property type="reaction ID" value="UER00002"/>
</dbReference>
<dbReference type="GO" id="GO:0005829">
    <property type="term" value="C:cytosol"/>
    <property type="evidence" value="ECO:0007669"/>
    <property type="project" value="TreeGrafter"/>
</dbReference>
<dbReference type="GO" id="GO:0004068">
    <property type="term" value="F:aspartate 1-decarboxylase activity"/>
    <property type="evidence" value="ECO:0007669"/>
    <property type="project" value="UniProtKB-UniRule"/>
</dbReference>
<dbReference type="GO" id="GO:0006523">
    <property type="term" value="P:alanine biosynthetic process"/>
    <property type="evidence" value="ECO:0007669"/>
    <property type="project" value="InterPro"/>
</dbReference>
<dbReference type="GO" id="GO:0015940">
    <property type="term" value="P:pantothenate biosynthetic process"/>
    <property type="evidence" value="ECO:0007669"/>
    <property type="project" value="UniProtKB-UniRule"/>
</dbReference>
<dbReference type="CDD" id="cd06919">
    <property type="entry name" value="Asp_decarbox"/>
    <property type="match status" value="1"/>
</dbReference>
<dbReference type="Gene3D" id="2.40.40.20">
    <property type="match status" value="1"/>
</dbReference>
<dbReference type="HAMAP" id="MF_00446">
    <property type="entry name" value="PanD"/>
    <property type="match status" value="1"/>
</dbReference>
<dbReference type="InterPro" id="IPR009010">
    <property type="entry name" value="Asp_de-COase-like_dom_sf"/>
</dbReference>
<dbReference type="InterPro" id="IPR003190">
    <property type="entry name" value="Asp_decarbox"/>
</dbReference>
<dbReference type="NCBIfam" id="TIGR00223">
    <property type="entry name" value="panD"/>
    <property type="match status" value="1"/>
</dbReference>
<dbReference type="PANTHER" id="PTHR21012">
    <property type="entry name" value="ASPARTATE 1-DECARBOXYLASE"/>
    <property type="match status" value="1"/>
</dbReference>
<dbReference type="PANTHER" id="PTHR21012:SF0">
    <property type="entry name" value="ASPARTATE 1-DECARBOXYLASE"/>
    <property type="match status" value="1"/>
</dbReference>
<dbReference type="Pfam" id="PF02261">
    <property type="entry name" value="Asp_decarbox"/>
    <property type="match status" value="1"/>
</dbReference>
<dbReference type="PIRSF" id="PIRSF006246">
    <property type="entry name" value="Asp_decarbox"/>
    <property type="match status" value="1"/>
</dbReference>
<dbReference type="SUPFAM" id="SSF50692">
    <property type="entry name" value="ADC-like"/>
    <property type="match status" value="1"/>
</dbReference>
<protein>
    <recommendedName>
        <fullName evidence="1">Aspartate 1-decarboxylase</fullName>
        <ecNumber evidence="1">4.1.1.11</ecNumber>
    </recommendedName>
    <alternativeName>
        <fullName evidence="1">Aspartate alpha-decarboxylase</fullName>
    </alternativeName>
    <component>
        <recommendedName>
            <fullName evidence="1">Aspartate 1-decarboxylase beta chain</fullName>
        </recommendedName>
    </component>
    <component>
        <recommendedName>
            <fullName evidence="1">Aspartate 1-decarboxylase alpha chain</fullName>
        </recommendedName>
    </component>
</protein>
<sequence length="127" mass="13945">MFRTMMNGKIHRATVTEANLNYVGSITIDSAILEAVDMLPNEKVQIVNNNNGARIETYIIPGEPGSGVICLNGAAARHVQVGDVVIIMSYGMFTTEEAKTHEPKIVVLDEKNHIEMILPEEKAHTTL</sequence>
<evidence type="ECO:0000255" key="1">
    <source>
        <dbReference type="HAMAP-Rule" id="MF_00446"/>
    </source>
</evidence>
<gene>
    <name evidence="1" type="primary">panD</name>
    <name type="ordered locus">Lm4b_01917</name>
</gene>
<keyword id="KW-0068">Autocatalytic cleavage</keyword>
<keyword id="KW-0963">Cytoplasm</keyword>
<keyword id="KW-0210">Decarboxylase</keyword>
<keyword id="KW-0456">Lyase</keyword>
<keyword id="KW-0566">Pantothenate biosynthesis</keyword>
<keyword id="KW-0670">Pyruvate</keyword>
<keyword id="KW-0704">Schiff base</keyword>
<keyword id="KW-0865">Zymogen</keyword>
<name>PAND_LISMC</name>
<reference key="1">
    <citation type="journal article" date="2012" name="BMC Genomics">
        <title>Comparative genomics and transcriptomics of lineages I, II, and III strains of Listeria monocytogenes.</title>
        <authorList>
            <person name="Hain T."/>
            <person name="Ghai R."/>
            <person name="Billion A."/>
            <person name="Kuenne C.T."/>
            <person name="Steinweg C."/>
            <person name="Izar B."/>
            <person name="Mohamed W."/>
            <person name="Mraheil M."/>
            <person name="Domann E."/>
            <person name="Schaffrath S."/>
            <person name="Karst U."/>
            <person name="Goesmann A."/>
            <person name="Oehm S."/>
            <person name="Puhler A."/>
            <person name="Merkl R."/>
            <person name="Vorwerk S."/>
            <person name="Glaser P."/>
            <person name="Garrido P."/>
            <person name="Rusniok C."/>
            <person name="Buchrieser C."/>
            <person name="Goebel W."/>
            <person name="Chakraborty T."/>
        </authorList>
    </citation>
    <scope>NUCLEOTIDE SEQUENCE [LARGE SCALE GENOMIC DNA]</scope>
    <source>
        <strain>CLIP80459</strain>
    </source>
</reference>
<proteinExistence type="inferred from homology"/>
<accession>C1KWK0</accession>